<sequence>MTTPAVKTGLFVGLNKGHVVTRRELAPRPNSRKGKTSKRTIFIRKLIREVAGMAPYEKRITELLKVGKDKRALKVAKRKLGTHKRAKRKREEMSSVLRKMRSLGGAAAAEKKM</sequence>
<name>RL361_ARATH</name>
<accession>O80929</accession>
<dbReference type="EMBL" id="AC004684">
    <property type="protein sequence ID" value="AAC23630.1"/>
    <property type="molecule type" value="Genomic_DNA"/>
</dbReference>
<dbReference type="EMBL" id="CP002685">
    <property type="protein sequence ID" value="AEC09423.1"/>
    <property type="molecule type" value="Genomic_DNA"/>
</dbReference>
<dbReference type="EMBL" id="CP002685">
    <property type="protein sequence ID" value="AEC09424.1"/>
    <property type="molecule type" value="Genomic_DNA"/>
</dbReference>
<dbReference type="EMBL" id="AY052221">
    <property type="protein sequence ID" value="AAK97691.1"/>
    <property type="molecule type" value="mRNA"/>
</dbReference>
<dbReference type="EMBL" id="AY060496">
    <property type="protein sequence ID" value="AAL31109.1"/>
    <property type="molecule type" value="mRNA"/>
</dbReference>
<dbReference type="EMBL" id="AY086261">
    <property type="protein sequence ID" value="AAM64334.1"/>
    <property type="molecule type" value="mRNA"/>
</dbReference>
<dbReference type="PIR" id="T02526">
    <property type="entry name" value="T02526"/>
</dbReference>
<dbReference type="RefSeq" id="NP_001078017.1">
    <property type="nucleotide sequence ID" value="NM_001084548.1"/>
</dbReference>
<dbReference type="RefSeq" id="NP_181296.1">
    <property type="nucleotide sequence ID" value="NM_129316.4"/>
</dbReference>
<dbReference type="SMR" id="O80929"/>
<dbReference type="BioGRID" id="3681">
    <property type="interactions" value="158"/>
</dbReference>
<dbReference type="FunCoup" id="O80929">
    <property type="interactions" value="2387"/>
</dbReference>
<dbReference type="STRING" id="3702.O80929"/>
<dbReference type="iPTMnet" id="O80929"/>
<dbReference type="MetOSite" id="O80929"/>
<dbReference type="PaxDb" id="3702-AT2G37600.2"/>
<dbReference type="ProteomicsDB" id="226888"/>
<dbReference type="EnsemblPlants" id="AT2G37600.1">
    <property type="protein sequence ID" value="AT2G37600.1"/>
    <property type="gene ID" value="AT2G37600"/>
</dbReference>
<dbReference type="EnsemblPlants" id="AT2G37600.2">
    <property type="protein sequence ID" value="AT2G37600.2"/>
    <property type="gene ID" value="AT2G37600"/>
</dbReference>
<dbReference type="GeneID" id="818337"/>
<dbReference type="Gramene" id="AT2G37600.1">
    <property type="protein sequence ID" value="AT2G37600.1"/>
    <property type="gene ID" value="AT2G37600"/>
</dbReference>
<dbReference type="Gramene" id="AT2G37600.2">
    <property type="protein sequence ID" value="AT2G37600.2"/>
    <property type="gene ID" value="AT2G37600"/>
</dbReference>
<dbReference type="KEGG" id="ath:AT2G37600"/>
<dbReference type="Araport" id="AT2G37600"/>
<dbReference type="TAIR" id="AT2G37600"/>
<dbReference type="eggNOG" id="KOG3452">
    <property type="taxonomic scope" value="Eukaryota"/>
</dbReference>
<dbReference type="HOGENOM" id="CLU_140672_0_0_1"/>
<dbReference type="InParanoid" id="O80929"/>
<dbReference type="OMA" id="GMHIRIM"/>
<dbReference type="PhylomeDB" id="O80929"/>
<dbReference type="PRO" id="PR:O80929"/>
<dbReference type="Proteomes" id="UP000006548">
    <property type="component" value="Chromosome 2"/>
</dbReference>
<dbReference type="ExpressionAtlas" id="O80929">
    <property type="expression patterns" value="baseline and differential"/>
</dbReference>
<dbReference type="GO" id="GO:0022625">
    <property type="term" value="C:cytosolic large ribosomal subunit"/>
    <property type="evidence" value="ECO:0007005"/>
    <property type="project" value="TAIR"/>
</dbReference>
<dbReference type="GO" id="GO:0005783">
    <property type="term" value="C:endoplasmic reticulum"/>
    <property type="evidence" value="ECO:0007005"/>
    <property type="project" value="TAIR"/>
</dbReference>
<dbReference type="GO" id="GO:0003735">
    <property type="term" value="F:structural constituent of ribosome"/>
    <property type="evidence" value="ECO:0000314"/>
    <property type="project" value="CAFA"/>
</dbReference>
<dbReference type="GO" id="GO:0006412">
    <property type="term" value="P:translation"/>
    <property type="evidence" value="ECO:0007669"/>
    <property type="project" value="InterPro"/>
</dbReference>
<dbReference type="FunFam" id="1.10.10.1760:FF:000001">
    <property type="entry name" value="60S ribosomal protein L36"/>
    <property type="match status" value="1"/>
</dbReference>
<dbReference type="Gene3D" id="1.10.10.1760">
    <property type="entry name" value="60S ribosomal protein L36"/>
    <property type="match status" value="1"/>
</dbReference>
<dbReference type="InterPro" id="IPR000509">
    <property type="entry name" value="Ribosomal_eL36"/>
</dbReference>
<dbReference type="InterPro" id="IPR038097">
    <property type="entry name" value="Ribosomal_eL36_sf"/>
</dbReference>
<dbReference type="PANTHER" id="PTHR10114">
    <property type="entry name" value="60S RIBOSOMAL PROTEIN L36"/>
    <property type="match status" value="1"/>
</dbReference>
<dbReference type="Pfam" id="PF01158">
    <property type="entry name" value="Ribosomal_L36e"/>
    <property type="match status" value="1"/>
</dbReference>
<dbReference type="PROSITE" id="PS01190">
    <property type="entry name" value="RIBOSOMAL_L36E"/>
    <property type="match status" value="1"/>
</dbReference>
<protein>
    <recommendedName>
        <fullName evidence="2">Large ribosomal subunit protein eL36z</fullName>
    </recommendedName>
    <alternativeName>
        <fullName>60S ribosomal protein L36-1</fullName>
    </alternativeName>
</protein>
<feature type="chain" id="PRO_0000195012" description="Large ribosomal subunit protein eL36z">
    <location>
        <begin position="1"/>
        <end position="113"/>
    </location>
</feature>
<feature type="region of interest" description="Disordered" evidence="1">
    <location>
        <begin position="78"/>
        <end position="113"/>
    </location>
</feature>
<feature type="compositionally biased region" description="Basic residues" evidence="1">
    <location>
        <begin position="78"/>
        <end position="88"/>
    </location>
</feature>
<evidence type="ECO:0000256" key="1">
    <source>
        <dbReference type="SAM" id="MobiDB-lite"/>
    </source>
</evidence>
<evidence type="ECO:0000303" key="2">
    <source>
    </source>
</evidence>
<evidence type="ECO:0000305" key="3"/>
<organism>
    <name type="scientific">Arabidopsis thaliana</name>
    <name type="common">Mouse-ear cress</name>
    <dbReference type="NCBI Taxonomy" id="3702"/>
    <lineage>
        <taxon>Eukaryota</taxon>
        <taxon>Viridiplantae</taxon>
        <taxon>Streptophyta</taxon>
        <taxon>Embryophyta</taxon>
        <taxon>Tracheophyta</taxon>
        <taxon>Spermatophyta</taxon>
        <taxon>Magnoliopsida</taxon>
        <taxon>eudicotyledons</taxon>
        <taxon>Gunneridae</taxon>
        <taxon>Pentapetalae</taxon>
        <taxon>rosids</taxon>
        <taxon>malvids</taxon>
        <taxon>Brassicales</taxon>
        <taxon>Brassicaceae</taxon>
        <taxon>Camelineae</taxon>
        <taxon>Arabidopsis</taxon>
    </lineage>
</organism>
<reference key="1">
    <citation type="journal article" date="1999" name="Nature">
        <title>Sequence and analysis of chromosome 2 of the plant Arabidopsis thaliana.</title>
        <authorList>
            <person name="Lin X."/>
            <person name="Kaul S."/>
            <person name="Rounsley S.D."/>
            <person name="Shea T.P."/>
            <person name="Benito M.-I."/>
            <person name="Town C.D."/>
            <person name="Fujii C.Y."/>
            <person name="Mason T.M."/>
            <person name="Bowman C.L."/>
            <person name="Barnstead M.E."/>
            <person name="Feldblyum T.V."/>
            <person name="Buell C.R."/>
            <person name="Ketchum K.A."/>
            <person name="Lee J.J."/>
            <person name="Ronning C.M."/>
            <person name="Koo H.L."/>
            <person name="Moffat K.S."/>
            <person name="Cronin L.A."/>
            <person name="Shen M."/>
            <person name="Pai G."/>
            <person name="Van Aken S."/>
            <person name="Umayam L."/>
            <person name="Tallon L.J."/>
            <person name="Gill J.E."/>
            <person name="Adams M.D."/>
            <person name="Carrera A.J."/>
            <person name="Creasy T.H."/>
            <person name="Goodman H.M."/>
            <person name="Somerville C.R."/>
            <person name="Copenhaver G.P."/>
            <person name="Preuss D."/>
            <person name="Nierman W.C."/>
            <person name="White O."/>
            <person name="Eisen J.A."/>
            <person name="Salzberg S.L."/>
            <person name="Fraser C.M."/>
            <person name="Venter J.C."/>
        </authorList>
    </citation>
    <scope>NUCLEOTIDE SEQUENCE [LARGE SCALE GENOMIC DNA]</scope>
    <source>
        <strain>cv. Columbia</strain>
    </source>
</reference>
<reference key="2">
    <citation type="journal article" date="2017" name="Plant J.">
        <title>Araport11: a complete reannotation of the Arabidopsis thaliana reference genome.</title>
        <authorList>
            <person name="Cheng C.Y."/>
            <person name="Krishnakumar V."/>
            <person name="Chan A.P."/>
            <person name="Thibaud-Nissen F."/>
            <person name="Schobel S."/>
            <person name="Town C.D."/>
        </authorList>
    </citation>
    <scope>GENOME REANNOTATION</scope>
    <source>
        <strain>cv. Columbia</strain>
    </source>
</reference>
<reference key="3">
    <citation type="journal article" date="2003" name="Science">
        <title>Empirical analysis of transcriptional activity in the Arabidopsis genome.</title>
        <authorList>
            <person name="Yamada K."/>
            <person name="Lim J."/>
            <person name="Dale J.M."/>
            <person name="Chen H."/>
            <person name="Shinn P."/>
            <person name="Palm C.J."/>
            <person name="Southwick A.M."/>
            <person name="Wu H.C."/>
            <person name="Kim C.J."/>
            <person name="Nguyen M."/>
            <person name="Pham P.K."/>
            <person name="Cheuk R.F."/>
            <person name="Karlin-Newmann G."/>
            <person name="Liu S.X."/>
            <person name="Lam B."/>
            <person name="Sakano H."/>
            <person name="Wu T."/>
            <person name="Yu G."/>
            <person name="Miranda M."/>
            <person name="Quach H.L."/>
            <person name="Tripp M."/>
            <person name="Chang C.H."/>
            <person name="Lee J.M."/>
            <person name="Toriumi M.J."/>
            <person name="Chan M.M."/>
            <person name="Tang C.C."/>
            <person name="Onodera C.S."/>
            <person name="Deng J.M."/>
            <person name="Akiyama K."/>
            <person name="Ansari Y."/>
            <person name="Arakawa T."/>
            <person name="Banh J."/>
            <person name="Banno F."/>
            <person name="Bowser L."/>
            <person name="Brooks S.Y."/>
            <person name="Carninci P."/>
            <person name="Chao Q."/>
            <person name="Choy N."/>
            <person name="Enju A."/>
            <person name="Goldsmith A.D."/>
            <person name="Gurjal M."/>
            <person name="Hansen N.F."/>
            <person name="Hayashizaki Y."/>
            <person name="Johnson-Hopson C."/>
            <person name="Hsuan V.W."/>
            <person name="Iida K."/>
            <person name="Karnes M."/>
            <person name="Khan S."/>
            <person name="Koesema E."/>
            <person name="Ishida J."/>
            <person name="Jiang P.X."/>
            <person name="Jones T."/>
            <person name="Kawai J."/>
            <person name="Kamiya A."/>
            <person name="Meyers C."/>
            <person name="Nakajima M."/>
            <person name="Narusaka M."/>
            <person name="Seki M."/>
            <person name="Sakurai T."/>
            <person name="Satou M."/>
            <person name="Tamse R."/>
            <person name="Vaysberg M."/>
            <person name="Wallender E.K."/>
            <person name="Wong C."/>
            <person name="Yamamura Y."/>
            <person name="Yuan S."/>
            <person name="Shinozaki K."/>
            <person name="Davis R.W."/>
            <person name="Theologis A."/>
            <person name="Ecker J.R."/>
        </authorList>
    </citation>
    <scope>NUCLEOTIDE SEQUENCE [LARGE SCALE MRNA]</scope>
    <source>
        <strain>cv. Columbia</strain>
    </source>
</reference>
<reference key="4">
    <citation type="submission" date="2002-03" db="EMBL/GenBank/DDBJ databases">
        <title>Full-length cDNA from Arabidopsis thaliana.</title>
        <authorList>
            <person name="Brover V.V."/>
            <person name="Troukhan M.E."/>
            <person name="Alexandrov N.A."/>
            <person name="Lu Y.-P."/>
            <person name="Flavell R.B."/>
            <person name="Feldmann K.A."/>
        </authorList>
    </citation>
    <scope>NUCLEOTIDE SEQUENCE [LARGE SCALE MRNA]</scope>
</reference>
<reference key="5">
    <citation type="journal article" date="2001" name="Plant Physiol.">
        <title>The organization of cytoplasmic ribosomal protein genes in the Arabidopsis genome.</title>
        <authorList>
            <person name="Barakat A."/>
            <person name="Szick-Miranda K."/>
            <person name="Chang I.-F."/>
            <person name="Guyot R."/>
            <person name="Blanc G."/>
            <person name="Cooke R."/>
            <person name="Delseny M."/>
            <person name="Bailey-Serres J."/>
        </authorList>
    </citation>
    <scope>GENE FAMILY ORGANIZATION</scope>
    <scope>NOMENCLATURE</scope>
</reference>
<reference key="6">
    <citation type="journal article" date="2023" name="Plant Cell">
        <title>An updated nomenclature for plant ribosomal protein genes.</title>
        <authorList>
            <person name="Scarpin M.R."/>
            <person name="Busche M."/>
            <person name="Martinez R.E."/>
            <person name="Harper L.C."/>
            <person name="Reiser L."/>
            <person name="Szakonyi D."/>
            <person name="Merchante C."/>
            <person name="Lan T."/>
            <person name="Xiong W."/>
            <person name="Mo B."/>
            <person name="Tang G."/>
            <person name="Chen X."/>
            <person name="Bailey-Serres J."/>
            <person name="Browning K.S."/>
            <person name="Brunkard J.O."/>
        </authorList>
    </citation>
    <scope>NOMENCLATURE</scope>
</reference>
<proteinExistence type="inferred from homology"/>
<comment type="similarity">
    <text evidence="3">Belongs to the eukaryotic ribosomal protein eL36 family.</text>
</comment>
<keyword id="KW-1185">Reference proteome</keyword>
<keyword id="KW-0687">Ribonucleoprotein</keyword>
<keyword id="KW-0689">Ribosomal protein</keyword>
<gene>
    <name type="primary">RPL36A</name>
    <name type="ordered locus">At2g37600</name>
    <name type="ORF">F13M22.10</name>
</gene>